<accession>Q45975</accession>
<gene>
    <name type="primary">fliR</name>
    <name type="ordered locus">CC_1076</name>
</gene>
<proteinExistence type="inferred from homology"/>
<sequence>MNAFATAFQVYVAALVFARVGAMVMTMPGIGDQAIPARIRLSFALLMALILAPLVQNTVGPIPSTLGGLGGAVIHEVLIGLMIGSVLRLFMTSLTTAGEIISMQTTLSFAQSTNPSMEGSSTAVATFLSMLGLTLVMATDLHHLFIAAIVKSYTIFPFTRAVPVNDAAALAVQTVAQSFSLGVQLAAPVIVFSLVFNLATGLVGRIMPAFQIFFVASPLSVILGLSLLALSLSGIAMVWTDRYRELLDIFT</sequence>
<evidence type="ECO:0000250" key="1"/>
<evidence type="ECO:0000255" key="2"/>
<evidence type="ECO:0000305" key="3"/>
<protein>
    <recommendedName>
        <fullName>Flagellar biosynthetic protein FliR</fullName>
    </recommendedName>
</protein>
<feature type="chain" id="PRO_0000192054" description="Flagellar biosynthetic protein FliR">
    <location>
        <begin position="1"/>
        <end position="251"/>
    </location>
</feature>
<feature type="transmembrane region" description="Helical" evidence="2">
    <location>
        <begin position="10"/>
        <end position="30"/>
    </location>
</feature>
<feature type="transmembrane region" description="Helical" evidence="2">
    <location>
        <begin position="43"/>
        <end position="63"/>
    </location>
</feature>
<feature type="transmembrane region" description="Helical" evidence="2">
    <location>
        <begin position="67"/>
        <end position="87"/>
    </location>
</feature>
<feature type="transmembrane region" description="Helical" evidence="2">
    <location>
        <begin position="130"/>
        <end position="150"/>
    </location>
</feature>
<feature type="transmembrane region" description="Helical" evidence="2">
    <location>
        <begin position="183"/>
        <end position="203"/>
    </location>
</feature>
<feature type="transmembrane region" description="Helical" evidence="2">
    <location>
        <begin position="212"/>
        <end position="232"/>
    </location>
</feature>
<dbReference type="EMBL" id="U13663">
    <property type="protein sequence ID" value="AAA66207.1"/>
    <property type="molecule type" value="Genomic_DNA"/>
</dbReference>
<dbReference type="EMBL" id="AE005673">
    <property type="protein sequence ID" value="AAK23060.1"/>
    <property type="molecule type" value="Genomic_DNA"/>
</dbReference>
<dbReference type="PIR" id="I40671">
    <property type="entry name" value="I40671"/>
</dbReference>
<dbReference type="RefSeq" id="NP_419892.1">
    <property type="nucleotide sequence ID" value="NC_002696.2"/>
</dbReference>
<dbReference type="RefSeq" id="WP_010918960.1">
    <property type="nucleotide sequence ID" value="NC_002696.2"/>
</dbReference>
<dbReference type="SMR" id="Q45975"/>
<dbReference type="STRING" id="190650.CC_1076"/>
<dbReference type="EnsemblBacteria" id="AAK23060">
    <property type="protein sequence ID" value="AAK23060"/>
    <property type="gene ID" value="CC_1076"/>
</dbReference>
<dbReference type="KEGG" id="ccr:CC_1076"/>
<dbReference type="PATRIC" id="fig|190650.5.peg.1094"/>
<dbReference type="eggNOG" id="COG1684">
    <property type="taxonomic scope" value="Bacteria"/>
</dbReference>
<dbReference type="HOGENOM" id="CLU_063626_3_0_5"/>
<dbReference type="BioCyc" id="CAULO:CC1076-MONOMER"/>
<dbReference type="Proteomes" id="UP000001816">
    <property type="component" value="Chromosome"/>
</dbReference>
<dbReference type="GO" id="GO:0009425">
    <property type="term" value="C:bacterial-type flagellum basal body"/>
    <property type="evidence" value="ECO:0007669"/>
    <property type="project" value="UniProtKB-SubCell"/>
</dbReference>
<dbReference type="GO" id="GO:0005886">
    <property type="term" value="C:plasma membrane"/>
    <property type="evidence" value="ECO:0007669"/>
    <property type="project" value="UniProtKB-SubCell"/>
</dbReference>
<dbReference type="GO" id="GO:0044780">
    <property type="term" value="P:bacterial-type flagellum assembly"/>
    <property type="evidence" value="ECO:0007669"/>
    <property type="project" value="InterPro"/>
</dbReference>
<dbReference type="GO" id="GO:0006605">
    <property type="term" value="P:protein targeting"/>
    <property type="evidence" value="ECO:0007669"/>
    <property type="project" value="InterPro"/>
</dbReference>
<dbReference type="InterPro" id="IPR006303">
    <property type="entry name" value="FliR"/>
</dbReference>
<dbReference type="InterPro" id="IPR002010">
    <property type="entry name" value="T3SS_IM_R"/>
</dbReference>
<dbReference type="NCBIfam" id="TIGR01400">
    <property type="entry name" value="fliR"/>
    <property type="match status" value="1"/>
</dbReference>
<dbReference type="PANTHER" id="PTHR30065">
    <property type="entry name" value="FLAGELLAR BIOSYNTHETIC PROTEIN FLIR"/>
    <property type="match status" value="1"/>
</dbReference>
<dbReference type="PANTHER" id="PTHR30065:SF8">
    <property type="entry name" value="FLAGELLAR BIOSYNTHETIC PROTEIN FLIR"/>
    <property type="match status" value="1"/>
</dbReference>
<dbReference type="Pfam" id="PF01311">
    <property type="entry name" value="Bac_export_1"/>
    <property type="match status" value="1"/>
</dbReference>
<dbReference type="PRINTS" id="PR00953">
    <property type="entry name" value="TYPE3IMRPROT"/>
</dbReference>
<reference key="1">
    <citation type="journal article" date="1995" name="J. Bacteriol.">
        <title>Caulobacter FliQ and FliR membrane proteins, required for flagellar biogenesis and cell division, belong to a family of virulence factor export proteins.</title>
        <authorList>
            <person name="Zhuang W.Y."/>
            <person name="Shapiro L."/>
        </authorList>
    </citation>
    <scope>NUCLEOTIDE SEQUENCE [GENOMIC DNA]</scope>
    <source>
        <strain>ATCC 19089 / CIP 103742 / CB 15</strain>
    </source>
</reference>
<reference key="2">
    <citation type="journal article" date="2001" name="Proc. Natl. Acad. Sci. U.S.A.">
        <title>Complete genome sequence of Caulobacter crescentus.</title>
        <authorList>
            <person name="Nierman W.C."/>
            <person name="Feldblyum T.V."/>
            <person name="Laub M.T."/>
            <person name="Paulsen I.T."/>
            <person name="Nelson K.E."/>
            <person name="Eisen J.A."/>
            <person name="Heidelberg J.F."/>
            <person name="Alley M.R.K."/>
            <person name="Ohta N."/>
            <person name="Maddock J.R."/>
            <person name="Potocka I."/>
            <person name="Nelson W.C."/>
            <person name="Newton A."/>
            <person name="Stephens C."/>
            <person name="Phadke N.D."/>
            <person name="Ely B."/>
            <person name="DeBoy R.T."/>
            <person name="Dodson R.J."/>
            <person name="Durkin A.S."/>
            <person name="Gwinn M.L."/>
            <person name="Haft D.H."/>
            <person name="Kolonay J.F."/>
            <person name="Smit J."/>
            <person name="Craven M.B."/>
            <person name="Khouri H.M."/>
            <person name="Shetty J."/>
            <person name="Berry K.J."/>
            <person name="Utterback T.R."/>
            <person name="Tran K."/>
            <person name="Wolf A.M."/>
            <person name="Vamathevan J.J."/>
            <person name="Ermolaeva M.D."/>
            <person name="White O."/>
            <person name="Salzberg S.L."/>
            <person name="Venter J.C."/>
            <person name="Shapiro L."/>
            <person name="Fraser C.M."/>
        </authorList>
    </citation>
    <scope>NUCLEOTIDE SEQUENCE [LARGE SCALE GENOMIC DNA]</scope>
    <source>
        <strain>ATCC 19089 / CIP 103742 / CB 15</strain>
    </source>
</reference>
<keyword id="KW-0975">Bacterial flagellum</keyword>
<keyword id="KW-1003">Cell membrane</keyword>
<keyword id="KW-0472">Membrane</keyword>
<keyword id="KW-1185">Reference proteome</keyword>
<keyword id="KW-0812">Transmembrane</keyword>
<keyword id="KW-1133">Transmembrane helix</keyword>
<organism>
    <name type="scientific">Caulobacter vibrioides (strain ATCC 19089 / CIP 103742 / CB 15)</name>
    <name type="common">Caulobacter crescentus</name>
    <dbReference type="NCBI Taxonomy" id="190650"/>
    <lineage>
        <taxon>Bacteria</taxon>
        <taxon>Pseudomonadati</taxon>
        <taxon>Pseudomonadota</taxon>
        <taxon>Alphaproteobacteria</taxon>
        <taxon>Caulobacterales</taxon>
        <taxon>Caulobacteraceae</taxon>
        <taxon>Caulobacter</taxon>
    </lineage>
</organism>
<comment type="function">
    <text>Role in flagellar biosynthesis.</text>
</comment>
<comment type="subcellular location">
    <subcellularLocation>
        <location evidence="3">Cell membrane</location>
        <topology evidence="3">Multi-pass membrane protein</topology>
    </subcellularLocation>
    <subcellularLocation>
        <location evidence="1">Bacterial flagellum basal body</location>
    </subcellularLocation>
</comment>
<comment type="similarity">
    <text evidence="3">Belongs to the FliR/MopE/SpaR family.</text>
</comment>
<name>FLIR_CAUVC</name>